<comment type="function">
    <text evidence="1">Plays an important role in the de novo pathway of purine nucleotide biosynthesis. Catalyzes the first committed step in the biosynthesis of AMP from IMP.</text>
</comment>
<comment type="catalytic activity">
    <reaction evidence="1">
        <text>IMP + L-aspartate + GTP = N(6)-(1,2-dicarboxyethyl)-AMP + GDP + phosphate + 2 H(+)</text>
        <dbReference type="Rhea" id="RHEA:15753"/>
        <dbReference type="ChEBI" id="CHEBI:15378"/>
        <dbReference type="ChEBI" id="CHEBI:29991"/>
        <dbReference type="ChEBI" id="CHEBI:37565"/>
        <dbReference type="ChEBI" id="CHEBI:43474"/>
        <dbReference type="ChEBI" id="CHEBI:57567"/>
        <dbReference type="ChEBI" id="CHEBI:58053"/>
        <dbReference type="ChEBI" id="CHEBI:58189"/>
        <dbReference type="EC" id="6.3.4.4"/>
    </reaction>
</comment>
<comment type="cofactor">
    <cofactor evidence="1">
        <name>Mg(2+)</name>
        <dbReference type="ChEBI" id="CHEBI:18420"/>
    </cofactor>
    <text evidence="1">Binds 1 Mg(2+) ion per subunit.</text>
</comment>
<comment type="pathway">
    <text evidence="1">Purine metabolism; AMP biosynthesis via de novo pathway; AMP from IMP: step 1/2.</text>
</comment>
<comment type="subunit">
    <text evidence="1">Homodimer.</text>
</comment>
<comment type="subcellular location">
    <subcellularLocation>
        <location evidence="1">Cytoplasm</location>
    </subcellularLocation>
</comment>
<comment type="similarity">
    <text evidence="1">Belongs to the adenylosuccinate synthetase family.</text>
</comment>
<dbReference type="EC" id="6.3.4.4" evidence="1"/>
<dbReference type="EMBL" id="CP000393">
    <property type="protein sequence ID" value="ABG52394.1"/>
    <property type="molecule type" value="Genomic_DNA"/>
</dbReference>
<dbReference type="RefSeq" id="WP_011612739.1">
    <property type="nucleotide sequence ID" value="NC_008312.1"/>
</dbReference>
<dbReference type="SMR" id="Q10ZD0"/>
<dbReference type="STRING" id="203124.Tery_3282"/>
<dbReference type="KEGG" id="ter:Tery_3282"/>
<dbReference type="eggNOG" id="COG0104">
    <property type="taxonomic scope" value="Bacteria"/>
</dbReference>
<dbReference type="HOGENOM" id="CLU_029848_0_0_3"/>
<dbReference type="OrthoDB" id="9807553at2"/>
<dbReference type="UniPathway" id="UPA00075">
    <property type="reaction ID" value="UER00335"/>
</dbReference>
<dbReference type="GO" id="GO:0005737">
    <property type="term" value="C:cytoplasm"/>
    <property type="evidence" value="ECO:0007669"/>
    <property type="project" value="UniProtKB-SubCell"/>
</dbReference>
<dbReference type="GO" id="GO:0004019">
    <property type="term" value="F:adenylosuccinate synthase activity"/>
    <property type="evidence" value="ECO:0007669"/>
    <property type="project" value="UniProtKB-UniRule"/>
</dbReference>
<dbReference type="GO" id="GO:0005525">
    <property type="term" value="F:GTP binding"/>
    <property type="evidence" value="ECO:0007669"/>
    <property type="project" value="UniProtKB-UniRule"/>
</dbReference>
<dbReference type="GO" id="GO:0000287">
    <property type="term" value="F:magnesium ion binding"/>
    <property type="evidence" value="ECO:0007669"/>
    <property type="project" value="UniProtKB-UniRule"/>
</dbReference>
<dbReference type="GO" id="GO:0044208">
    <property type="term" value="P:'de novo' AMP biosynthetic process"/>
    <property type="evidence" value="ECO:0007669"/>
    <property type="project" value="UniProtKB-UniRule"/>
</dbReference>
<dbReference type="GO" id="GO:0046040">
    <property type="term" value="P:IMP metabolic process"/>
    <property type="evidence" value="ECO:0007669"/>
    <property type="project" value="TreeGrafter"/>
</dbReference>
<dbReference type="CDD" id="cd03108">
    <property type="entry name" value="AdSS"/>
    <property type="match status" value="1"/>
</dbReference>
<dbReference type="FunFam" id="1.10.300.10:FF:000001">
    <property type="entry name" value="Adenylosuccinate synthetase"/>
    <property type="match status" value="1"/>
</dbReference>
<dbReference type="FunFam" id="3.90.170.10:FF:000001">
    <property type="entry name" value="Adenylosuccinate synthetase"/>
    <property type="match status" value="1"/>
</dbReference>
<dbReference type="Gene3D" id="3.40.440.10">
    <property type="entry name" value="Adenylosuccinate Synthetase, subunit A, domain 1"/>
    <property type="match status" value="1"/>
</dbReference>
<dbReference type="Gene3D" id="1.10.300.10">
    <property type="entry name" value="Adenylosuccinate Synthetase, subunit A, domain 2"/>
    <property type="match status" value="1"/>
</dbReference>
<dbReference type="Gene3D" id="3.90.170.10">
    <property type="entry name" value="Adenylosuccinate Synthetase, subunit A, domain 3"/>
    <property type="match status" value="1"/>
</dbReference>
<dbReference type="HAMAP" id="MF_00011">
    <property type="entry name" value="Adenylosucc_synth"/>
    <property type="match status" value="1"/>
</dbReference>
<dbReference type="InterPro" id="IPR018220">
    <property type="entry name" value="Adenylosuccin_syn_GTP-bd"/>
</dbReference>
<dbReference type="InterPro" id="IPR033128">
    <property type="entry name" value="Adenylosuccin_syn_Lys_AS"/>
</dbReference>
<dbReference type="InterPro" id="IPR042109">
    <property type="entry name" value="Adenylosuccinate_synth_dom1"/>
</dbReference>
<dbReference type="InterPro" id="IPR042110">
    <property type="entry name" value="Adenylosuccinate_synth_dom2"/>
</dbReference>
<dbReference type="InterPro" id="IPR042111">
    <property type="entry name" value="Adenylosuccinate_synth_dom3"/>
</dbReference>
<dbReference type="InterPro" id="IPR001114">
    <property type="entry name" value="Adenylosuccinate_synthetase"/>
</dbReference>
<dbReference type="InterPro" id="IPR027417">
    <property type="entry name" value="P-loop_NTPase"/>
</dbReference>
<dbReference type="NCBIfam" id="NF002223">
    <property type="entry name" value="PRK01117.1"/>
    <property type="match status" value="1"/>
</dbReference>
<dbReference type="NCBIfam" id="TIGR00184">
    <property type="entry name" value="purA"/>
    <property type="match status" value="1"/>
</dbReference>
<dbReference type="PANTHER" id="PTHR11846">
    <property type="entry name" value="ADENYLOSUCCINATE SYNTHETASE"/>
    <property type="match status" value="1"/>
</dbReference>
<dbReference type="PANTHER" id="PTHR11846:SF0">
    <property type="entry name" value="ADENYLOSUCCINATE SYNTHETASE"/>
    <property type="match status" value="1"/>
</dbReference>
<dbReference type="Pfam" id="PF00709">
    <property type="entry name" value="Adenylsucc_synt"/>
    <property type="match status" value="1"/>
</dbReference>
<dbReference type="SMART" id="SM00788">
    <property type="entry name" value="Adenylsucc_synt"/>
    <property type="match status" value="1"/>
</dbReference>
<dbReference type="SUPFAM" id="SSF52540">
    <property type="entry name" value="P-loop containing nucleoside triphosphate hydrolases"/>
    <property type="match status" value="1"/>
</dbReference>
<dbReference type="PROSITE" id="PS01266">
    <property type="entry name" value="ADENYLOSUCCIN_SYN_1"/>
    <property type="match status" value="1"/>
</dbReference>
<dbReference type="PROSITE" id="PS00513">
    <property type="entry name" value="ADENYLOSUCCIN_SYN_2"/>
    <property type="match status" value="1"/>
</dbReference>
<reference key="1">
    <citation type="journal article" date="2015" name="Proc. Natl. Acad. Sci. U.S.A.">
        <title>Trichodesmium genome maintains abundant, widespread noncoding DNA in situ, despite oligotrophic lifestyle.</title>
        <authorList>
            <person name="Walworth N."/>
            <person name="Pfreundt U."/>
            <person name="Nelson W.C."/>
            <person name="Mincer T."/>
            <person name="Heidelberg J.F."/>
            <person name="Fu F."/>
            <person name="Waterbury J.B."/>
            <person name="Glavina del Rio T."/>
            <person name="Goodwin L."/>
            <person name="Kyrpides N.C."/>
            <person name="Land M.L."/>
            <person name="Woyke T."/>
            <person name="Hutchins D.A."/>
            <person name="Hess W.R."/>
            <person name="Webb E.A."/>
        </authorList>
    </citation>
    <scope>NUCLEOTIDE SEQUENCE [LARGE SCALE GENOMIC DNA]</scope>
    <source>
        <strain>IMS101</strain>
    </source>
</reference>
<gene>
    <name evidence="1" type="primary">purA</name>
    <name type="ordered locus">Tery_3282</name>
</gene>
<evidence type="ECO:0000255" key="1">
    <source>
        <dbReference type="HAMAP-Rule" id="MF_00011"/>
    </source>
</evidence>
<keyword id="KW-0963">Cytoplasm</keyword>
<keyword id="KW-0342">GTP-binding</keyword>
<keyword id="KW-0436">Ligase</keyword>
<keyword id="KW-0460">Magnesium</keyword>
<keyword id="KW-0479">Metal-binding</keyword>
<keyword id="KW-0547">Nucleotide-binding</keyword>
<keyword id="KW-0658">Purine biosynthesis</keyword>
<protein>
    <recommendedName>
        <fullName evidence="1">Adenylosuccinate synthetase</fullName>
        <shortName evidence="1">AMPSase</shortName>
        <shortName evidence="1">AdSS</shortName>
        <ecNumber evidence="1">6.3.4.4</ecNumber>
    </recommendedName>
    <alternativeName>
        <fullName evidence="1">IMP--aspartate ligase</fullName>
    </alternativeName>
</protein>
<name>PURA_TRIEI</name>
<accession>Q10ZD0</accession>
<organism>
    <name type="scientific">Trichodesmium erythraeum (strain IMS101)</name>
    <dbReference type="NCBI Taxonomy" id="203124"/>
    <lineage>
        <taxon>Bacteria</taxon>
        <taxon>Bacillati</taxon>
        <taxon>Cyanobacteriota</taxon>
        <taxon>Cyanophyceae</taxon>
        <taxon>Oscillatoriophycideae</taxon>
        <taxon>Oscillatoriales</taxon>
        <taxon>Microcoleaceae</taxon>
        <taxon>Trichodesmium</taxon>
    </lineage>
</organism>
<sequence>MANVIVIGAQWGDEGKGKITDLLSKSADVVVRYQGGVNAGHTVVVEGKIFKLHLIPSGILYPDTDCIIGSGTVIDPKVIIEELDQVEALGISTANLMISGAAHVTMPYHRMIDKASEKRRGSKKIGTTGRGIGPTYADKSERTGIRMIDLVNPDRLKEQINWTVNYKNVILEKLYDLSPLNPEEVVNEYLNFADRLRPHVIDASLKIYNAIQLKRNILFEGAQGTLLDLDHGTYPYVTSSNPVAGGACVGTGVGPTMIDRVIGVAKAYTTRVGEGPFPTEAKDEIGDLLCDRGAEFGTTTGRKRRCGWFDAVIGRYAVRINGMDCMAITKLDVLDGLEEIKVCVAYDMEGKRCEDFPGSAIQLSKCKPIYKTLPGWKESTVDCRNLEDLPKQALDYLRFLAELMNVPIAIVSLGASRHQTIVVEDPIHGPKRGLLYS</sequence>
<feature type="chain" id="PRO_1000000943" description="Adenylosuccinate synthetase">
    <location>
        <begin position="1"/>
        <end position="437"/>
    </location>
</feature>
<feature type="active site" description="Proton acceptor" evidence="1">
    <location>
        <position position="13"/>
    </location>
</feature>
<feature type="active site" description="Proton donor" evidence="1">
    <location>
        <position position="41"/>
    </location>
</feature>
<feature type="binding site" evidence="1">
    <location>
        <begin position="12"/>
        <end position="18"/>
    </location>
    <ligand>
        <name>GTP</name>
        <dbReference type="ChEBI" id="CHEBI:37565"/>
    </ligand>
</feature>
<feature type="binding site" description="in other chain" evidence="1">
    <location>
        <begin position="13"/>
        <end position="16"/>
    </location>
    <ligand>
        <name>IMP</name>
        <dbReference type="ChEBI" id="CHEBI:58053"/>
        <note>ligand shared between dimeric partners</note>
    </ligand>
</feature>
<feature type="binding site" evidence="1">
    <location>
        <position position="13"/>
    </location>
    <ligand>
        <name>Mg(2+)</name>
        <dbReference type="ChEBI" id="CHEBI:18420"/>
    </ligand>
</feature>
<feature type="binding site" description="in other chain" evidence="1">
    <location>
        <begin position="38"/>
        <end position="41"/>
    </location>
    <ligand>
        <name>IMP</name>
        <dbReference type="ChEBI" id="CHEBI:58053"/>
        <note>ligand shared between dimeric partners</note>
    </ligand>
</feature>
<feature type="binding site" evidence="1">
    <location>
        <begin position="40"/>
        <end position="42"/>
    </location>
    <ligand>
        <name>GTP</name>
        <dbReference type="ChEBI" id="CHEBI:37565"/>
    </ligand>
</feature>
<feature type="binding site" evidence="1">
    <location>
        <position position="40"/>
    </location>
    <ligand>
        <name>Mg(2+)</name>
        <dbReference type="ChEBI" id="CHEBI:18420"/>
    </ligand>
</feature>
<feature type="binding site" description="in other chain" evidence="1">
    <location>
        <position position="128"/>
    </location>
    <ligand>
        <name>IMP</name>
        <dbReference type="ChEBI" id="CHEBI:58053"/>
        <note>ligand shared between dimeric partners</note>
    </ligand>
</feature>
<feature type="binding site" evidence="1">
    <location>
        <position position="142"/>
    </location>
    <ligand>
        <name>IMP</name>
        <dbReference type="ChEBI" id="CHEBI:58053"/>
        <note>ligand shared between dimeric partners</note>
    </ligand>
</feature>
<feature type="binding site" description="in other chain" evidence="1">
    <location>
        <position position="223"/>
    </location>
    <ligand>
        <name>IMP</name>
        <dbReference type="ChEBI" id="CHEBI:58053"/>
        <note>ligand shared between dimeric partners</note>
    </ligand>
</feature>
<feature type="binding site" description="in other chain" evidence="1">
    <location>
        <position position="238"/>
    </location>
    <ligand>
        <name>IMP</name>
        <dbReference type="ChEBI" id="CHEBI:58053"/>
        <note>ligand shared between dimeric partners</note>
    </ligand>
</feature>
<feature type="binding site" evidence="1">
    <location>
        <begin position="298"/>
        <end position="304"/>
    </location>
    <ligand>
        <name>substrate</name>
    </ligand>
</feature>
<feature type="binding site" description="in other chain" evidence="1">
    <location>
        <position position="302"/>
    </location>
    <ligand>
        <name>IMP</name>
        <dbReference type="ChEBI" id="CHEBI:58053"/>
        <note>ligand shared between dimeric partners</note>
    </ligand>
</feature>
<feature type="binding site" evidence="1">
    <location>
        <position position="304"/>
    </location>
    <ligand>
        <name>GTP</name>
        <dbReference type="ChEBI" id="CHEBI:37565"/>
    </ligand>
</feature>
<feature type="binding site" evidence="1">
    <location>
        <begin position="330"/>
        <end position="332"/>
    </location>
    <ligand>
        <name>GTP</name>
        <dbReference type="ChEBI" id="CHEBI:37565"/>
    </ligand>
</feature>
<feature type="binding site" evidence="1">
    <location>
        <begin position="412"/>
        <end position="414"/>
    </location>
    <ligand>
        <name>GTP</name>
        <dbReference type="ChEBI" id="CHEBI:37565"/>
    </ligand>
</feature>
<proteinExistence type="inferred from homology"/>